<accession>C1DFK8</accession>
<name>RBFA_AZOVD</name>
<sequence length="129" mass="14669">MAKDYSRTQRIGDQMQRELSFLIQREIKDPRLGMITVTAVEVARDLSHAKVFITVMGKEDSADEIERNLEILHEAAGFLRMQLGKSMKLRSVPQLHFSYDASVRRGVELSALIERAVAEDRLHTGKGEE</sequence>
<reference key="1">
    <citation type="journal article" date="2009" name="J. Bacteriol.">
        <title>Genome sequence of Azotobacter vinelandii, an obligate aerobe specialized to support diverse anaerobic metabolic processes.</title>
        <authorList>
            <person name="Setubal J.C."/>
            <person name="Dos Santos P."/>
            <person name="Goldman B.S."/>
            <person name="Ertesvaag H."/>
            <person name="Espin G."/>
            <person name="Rubio L.M."/>
            <person name="Valla S."/>
            <person name="Almeida N.F."/>
            <person name="Balasubramanian D."/>
            <person name="Cromes L."/>
            <person name="Curatti L."/>
            <person name="Du Z."/>
            <person name="Godsy E."/>
            <person name="Goodner B."/>
            <person name="Hellner-Burris K."/>
            <person name="Hernandez J.A."/>
            <person name="Houmiel K."/>
            <person name="Imperial J."/>
            <person name="Kennedy C."/>
            <person name="Larson T.J."/>
            <person name="Latreille P."/>
            <person name="Ligon L.S."/>
            <person name="Lu J."/>
            <person name="Maerk M."/>
            <person name="Miller N.M."/>
            <person name="Norton S."/>
            <person name="O'Carroll I.P."/>
            <person name="Paulsen I."/>
            <person name="Raulfs E.C."/>
            <person name="Roemer R."/>
            <person name="Rosser J."/>
            <person name="Segura D."/>
            <person name="Slater S."/>
            <person name="Stricklin S.L."/>
            <person name="Studholme D.J."/>
            <person name="Sun J."/>
            <person name="Viana C.J."/>
            <person name="Wallin E."/>
            <person name="Wang B."/>
            <person name="Wheeler C."/>
            <person name="Zhu H."/>
            <person name="Dean D.R."/>
            <person name="Dixon R."/>
            <person name="Wood D."/>
        </authorList>
    </citation>
    <scope>NUCLEOTIDE SEQUENCE [LARGE SCALE GENOMIC DNA]</scope>
    <source>
        <strain>DJ / ATCC BAA-1303</strain>
    </source>
</reference>
<organism>
    <name type="scientific">Azotobacter vinelandii (strain DJ / ATCC BAA-1303)</name>
    <dbReference type="NCBI Taxonomy" id="322710"/>
    <lineage>
        <taxon>Bacteria</taxon>
        <taxon>Pseudomonadati</taxon>
        <taxon>Pseudomonadota</taxon>
        <taxon>Gammaproteobacteria</taxon>
        <taxon>Pseudomonadales</taxon>
        <taxon>Pseudomonadaceae</taxon>
        <taxon>Azotobacter</taxon>
    </lineage>
</organism>
<keyword id="KW-0963">Cytoplasm</keyword>
<keyword id="KW-0690">Ribosome biogenesis</keyword>
<feature type="chain" id="PRO_1000201623" description="Ribosome-binding factor A">
    <location>
        <begin position="1"/>
        <end position="129"/>
    </location>
</feature>
<dbReference type="EMBL" id="CP001157">
    <property type="protein sequence ID" value="ACO80404.1"/>
    <property type="molecule type" value="Genomic_DNA"/>
</dbReference>
<dbReference type="RefSeq" id="WP_012702772.1">
    <property type="nucleotide sequence ID" value="NC_012560.1"/>
</dbReference>
<dbReference type="SMR" id="C1DFK8"/>
<dbReference type="STRING" id="322710.Avin_42810"/>
<dbReference type="EnsemblBacteria" id="ACO80404">
    <property type="protein sequence ID" value="ACO80404"/>
    <property type="gene ID" value="Avin_42810"/>
</dbReference>
<dbReference type="GeneID" id="88187195"/>
<dbReference type="KEGG" id="avn:Avin_42810"/>
<dbReference type="eggNOG" id="COG0858">
    <property type="taxonomic scope" value="Bacteria"/>
</dbReference>
<dbReference type="HOGENOM" id="CLU_089475_5_0_6"/>
<dbReference type="OrthoDB" id="307788at2"/>
<dbReference type="Proteomes" id="UP000002424">
    <property type="component" value="Chromosome"/>
</dbReference>
<dbReference type="GO" id="GO:0005829">
    <property type="term" value="C:cytosol"/>
    <property type="evidence" value="ECO:0007669"/>
    <property type="project" value="TreeGrafter"/>
</dbReference>
<dbReference type="GO" id="GO:0043024">
    <property type="term" value="F:ribosomal small subunit binding"/>
    <property type="evidence" value="ECO:0007669"/>
    <property type="project" value="TreeGrafter"/>
</dbReference>
<dbReference type="GO" id="GO:0030490">
    <property type="term" value="P:maturation of SSU-rRNA"/>
    <property type="evidence" value="ECO:0007669"/>
    <property type="project" value="UniProtKB-UniRule"/>
</dbReference>
<dbReference type="Gene3D" id="3.30.300.20">
    <property type="match status" value="1"/>
</dbReference>
<dbReference type="HAMAP" id="MF_00003">
    <property type="entry name" value="RbfA"/>
    <property type="match status" value="1"/>
</dbReference>
<dbReference type="InterPro" id="IPR015946">
    <property type="entry name" value="KH_dom-like_a/b"/>
</dbReference>
<dbReference type="InterPro" id="IPR000238">
    <property type="entry name" value="RbfA"/>
</dbReference>
<dbReference type="InterPro" id="IPR023799">
    <property type="entry name" value="RbfA_dom_sf"/>
</dbReference>
<dbReference type="InterPro" id="IPR020053">
    <property type="entry name" value="Ribosome-bd_factorA_CS"/>
</dbReference>
<dbReference type="NCBIfam" id="TIGR00082">
    <property type="entry name" value="rbfA"/>
    <property type="match status" value="1"/>
</dbReference>
<dbReference type="PANTHER" id="PTHR33515">
    <property type="entry name" value="RIBOSOME-BINDING FACTOR A, CHLOROPLASTIC-RELATED"/>
    <property type="match status" value="1"/>
</dbReference>
<dbReference type="PANTHER" id="PTHR33515:SF1">
    <property type="entry name" value="RIBOSOME-BINDING FACTOR A, CHLOROPLASTIC-RELATED"/>
    <property type="match status" value="1"/>
</dbReference>
<dbReference type="Pfam" id="PF02033">
    <property type="entry name" value="RBFA"/>
    <property type="match status" value="1"/>
</dbReference>
<dbReference type="SUPFAM" id="SSF89919">
    <property type="entry name" value="Ribosome-binding factor A, RbfA"/>
    <property type="match status" value="1"/>
</dbReference>
<dbReference type="PROSITE" id="PS01319">
    <property type="entry name" value="RBFA"/>
    <property type="match status" value="1"/>
</dbReference>
<gene>
    <name evidence="1" type="primary">rbfA</name>
    <name type="ordered locus">Avin_42810</name>
</gene>
<comment type="function">
    <text evidence="1">One of several proteins that assist in the late maturation steps of the functional core of the 30S ribosomal subunit. Associates with free 30S ribosomal subunits (but not with 30S subunits that are part of 70S ribosomes or polysomes). Required for efficient processing of 16S rRNA. May interact with the 5'-terminal helix region of 16S rRNA.</text>
</comment>
<comment type="subunit">
    <text evidence="1">Monomer. Binds 30S ribosomal subunits, but not 50S ribosomal subunits or 70S ribosomes.</text>
</comment>
<comment type="subcellular location">
    <subcellularLocation>
        <location evidence="1">Cytoplasm</location>
    </subcellularLocation>
</comment>
<comment type="similarity">
    <text evidence="1">Belongs to the RbfA family.</text>
</comment>
<evidence type="ECO:0000255" key="1">
    <source>
        <dbReference type="HAMAP-Rule" id="MF_00003"/>
    </source>
</evidence>
<protein>
    <recommendedName>
        <fullName evidence="1">Ribosome-binding factor A</fullName>
    </recommendedName>
</protein>
<proteinExistence type="inferred from homology"/>